<reference key="1">
    <citation type="journal article" date="2007" name="PLoS Genet.">
        <title>Patterns and implications of gene gain and loss in the evolution of Prochlorococcus.</title>
        <authorList>
            <person name="Kettler G.C."/>
            <person name="Martiny A.C."/>
            <person name="Huang K."/>
            <person name="Zucker J."/>
            <person name="Coleman M.L."/>
            <person name="Rodrigue S."/>
            <person name="Chen F."/>
            <person name="Lapidus A."/>
            <person name="Ferriera S."/>
            <person name="Johnson J."/>
            <person name="Steglich C."/>
            <person name="Church G.M."/>
            <person name="Richardson P."/>
            <person name="Chisholm S.W."/>
        </authorList>
    </citation>
    <scope>NUCLEOTIDE SEQUENCE [LARGE SCALE GENOMIC DNA]</scope>
    <source>
        <strain>MIT 9211</strain>
    </source>
</reference>
<evidence type="ECO:0000255" key="1">
    <source>
        <dbReference type="HAMAP-Rule" id="MF_00086"/>
    </source>
</evidence>
<feature type="chain" id="PRO_1000093072" description="S-adenosylmethionine synthase">
    <location>
        <begin position="1"/>
        <end position="410"/>
    </location>
</feature>
<feature type="region of interest" description="Flexible loop" evidence="1">
    <location>
        <begin position="100"/>
        <end position="110"/>
    </location>
</feature>
<feature type="binding site" description="in other chain" evidence="1">
    <location>
        <position position="15"/>
    </location>
    <ligand>
        <name>ATP</name>
        <dbReference type="ChEBI" id="CHEBI:30616"/>
        <note>ligand shared between two neighboring subunits</note>
    </ligand>
</feature>
<feature type="binding site" evidence="1">
    <location>
        <position position="17"/>
    </location>
    <ligand>
        <name>Mg(2+)</name>
        <dbReference type="ChEBI" id="CHEBI:18420"/>
    </ligand>
</feature>
<feature type="binding site" evidence="1">
    <location>
        <position position="43"/>
    </location>
    <ligand>
        <name>K(+)</name>
        <dbReference type="ChEBI" id="CHEBI:29103"/>
    </ligand>
</feature>
<feature type="binding site" description="in other chain" evidence="1">
    <location>
        <position position="56"/>
    </location>
    <ligand>
        <name>L-methionine</name>
        <dbReference type="ChEBI" id="CHEBI:57844"/>
        <note>ligand shared between two neighboring subunits</note>
    </ligand>
</feature>
<feature type="binding site" description="in other chain" evidence="1">
    <location>
        <position position="100"/>
    </location>
    <ligand>
        <name>L-methionine</name>
        <dbReference type="ChEBI" id="CHEBI:57844"/>
        <note>ligand shared between two neighboring subunits</note>
    </ligand>
</feature>
<feature type="binding site" description="in other chain" evidence="1">
    <location>
        <begin position="171"/>
        <end position="173"/>
    </location>
    <ligand>
        <name>ATP</name>
        <dbReference type="ChEBI" id="CHEBI:30616"/>
        <note>ligand shared between two neighboring subunits</note>
    </ligand>
</feature>
<feature type="binding site" description="in other chain" evidence="1">
    <location>
        <begin position="248"/>
        <end position="249"/>
    </location>
    <ligand>
        <name>ATP</name>
        <dbReference type="ChEBI" id="CHEBI:30616"/>
        <note>ligand shared between two neighboring subunits</note>
    </ligand>
</feature>
<feature type="binding site" evidence="1">
    <location>
        <position position="257"/>
    </location>
    <ligand>
        <name>ATP</name>
        <dbReference type="ChEBI" id="CHEBI:30616"/>
        <note>ligand shared between two neighboring subunits</note>
    </ligand>
</feature>
<feature type="binding site" evidence="1">
    <location>
        <position position="257"/>
    </location>
    <ligand>
        <name>L-methionine</name>
        <dbReference type="ChEBI" id="CHEBI:57844"/>
        <note>ligand shared between two neighboring subunits</note>
    </ligand>
</feature>
<feature type="binding site" description="in other chain" evidence="1">
    <location>
        <begin position="263"/>
        <end position="264"/>
    </location>
    <ligand>
        <name>ATP</name>
        <dbReference type="ChEBI" id="CHEBI:30616"/>
        <note>ligand shared between two neighboring subunits</note>
    </ligand>
</feature>
<feature type="binding site" evidence="1">
    <location>
        <position position="280"/>
    </location>
    <ligand>
        <name>ATP</name>
        <dbReference type="ChEBI" id="CHEBI:30616"/>
        <note>ligand shared between two neighboring subunits</note>
    </ligand>
</feature>
<feature type="binding site" evidence="1">
    <location>
        <position position="284"/>
    </location>
    <ligand>
        <name>ATP</name>
        <dbReference type="ChEBI" id="CHEBI:30616"/>
        <note>ligand shared between two neighboring subunits</note>
    </ligand>
</feature>
<feature type="binding site" description="in other chain" evidence="1">
    <location>
        <position position="288"/>
    </location>
    <ligand>
        <name>L-methionine</name>
        <dbReference type="ChEBI" id="CHEBI:57844"/>
        <note>ligand shared between two neighboring subunits</note>
    </ligand>
</feature>
<dbReference type="EC" id="2.5.1.6" evidence="1"/>
<dbReference type="EMBL" id="CP000878">
    <property type="protein sequence ID" value="ABX08276.1"/>
    <property type="molecule type" value="Genomic_DNA"/>
</dbReference>
<dbReference type="RefSeq" id="WP_012194900.1">
    <property type="nucleotide sequence ID" value="NC_009976.1"/>
</dbReference>
<dbReference type="SMR" id="A9BDW6"/>
<dbReference type="STRING" id="93059.P9211_03451"/>
<dbReference type="KEGG" id="pmj:P9211_03451"/>
<dbReference type="eggNOG" id="COG0192">
    <property type="taxonomic scope" value="Bacteria"/>
</dbReference>
<dbReference type="HOGENOM" id="CLU_041802_1_1_3"/>
<dbReference type="OrthoDB" id="9801686at2"/>
<dbReference type="UniPathway" id="UPA00315">
    <property type="reaction ID" value="UER00080"/>
</dbReference>
<dbReference type="Proteomes" id="UP000000788">
    <property type="component" value="Chromosome"/>
</dbReference>
<dbReference type="GO" id="GO:0005737">
    <property type="term" value="C:cytoplasm"/>
    <property type="evidence" value="ECO:0007669"/>
    <property type="project" value="UniProtKB-SubCell"/>
</dbReference>
<dbReference type="GO" id="GO:0005524">
    <property type="term" value="F:ATP binding"/>
    <property type="evidence" value="ECO:0007669"/>
    <property type="project" value="UniProtKB-UniRule"/>
</dbReference>
<dbReference type="GO" id="GO:0000287">
    <property type="term" value="F:magnesium ion binding"/>
    <property type="evidence" value="ECO:0007669"/>
    <property type="project" value="UniProtKB-UniRule"/>
</dbReference>
<dbReference type="GO" id="GO:0004478">
    <property type="term" value="F:methionine adenosyltransferase activity"/>
    <property type="evidence" value="ECO:0007669"/>
    <property type="project" value="UniProtKB-UniRule"/>
</dbReference>
<dbReference type="GO" id="GO:0006730">
    <property type="term" value="P:one-carbon metabolic process"/>
    <property type="evidence" value="ECO:0007669"/>
    <property type="project" value="UniProtKB-KW"/>
</dbReference>
<dbReference type="GO" id="GO:0006556">
    <property type="term" value="P:S-adenosylmethionine biosynthetic process"/>
    <property type="evidence" value="ECO:0007669"/>
    <property type="project" value="UniProtKB-UniRule"/>
</dbReference>
<dbReference type="CDD" id="cd18079">
    <property type="entry name" value="S-AdoMet_synt"/>
    <property type="match status" value="1"/>
</dbReference>
<dbReference type="FunFam" id="3.30.300.10:FF:000003">
    <property type="entry name" value="S-adenosylmethionine synthase"/>
    <property type="match status" value="1"/>
</dbReference>
<dbReference type="Gene3D" id="3.30.300.10">
    <property type="match status" value="3"/>
</dbReference>
<dbReference type="HAMAP" id="MF_00086">
    <property type="entry name" value="S_AdoMet_synth1"/>
    <property type="match status" value="1"/>
</dbReference>
<dbReference type="InterPro" id="IPR022631">
    <property type="entry name" value="ADOMET_SYNTHASE_CS"/>
</dbReference>
<dbReference type="InterPro" id="IPR022630">
    <property type="entry name" value="S-AdoMet_synt_C"/>
</dbReference>
<dbReference type="InterPro" id="IPR022629">
    <property type="entry name" value="S-AdoMet_synt_central"/>
</dbReference>
<dbReference type="InterPro" id="IPR022628">
    <property type="entry name" value="S-AdoMet_synt_N"/>
</dbReference>
<dbReference type="InterPro" id="IPR002133">
    <property type="entry name" value="S-AdoMet_synthetase"/>
</dbReference>
<dbReference type="InterPro" id="IPR022636">
    <property type="entry name" value="S-AdoMet_synthetase_sfam"/>
</dbReference>
<dbReference type="NCBIfam" id="TIGR01034">
    <property type="entry name" value="metK"/>
    <property type="match status" value="1"/>
</dbReference>
<dbReference type="PANTHER" id="PTHR11964">
    <property type="entry name" value="S-ADENOSYLMETHIONINE SYNTHETASE"/>
    <property type="match status" value="1"/>
</dbReference>
<dbReference type="Pfam" id="PF02773">
    <property type="entry name" value="S-AdoMet_synt_C"/>
    <property type="match status" value="1"/>
</dbReference>
<dbReference type="Pfam" id="PF02772">
    <property type="entry name" value="S-AdoMet_synt_M"/>
    <property type="match status" value="1"/>
</dbReference>
<dbReference type="Pfam" id="PF00438">
    <property type="entry name" value="S-AdoMet_synt_N"/>
    <property type="match status" value="1"/>
</dbReference>
<dbReference type="PIRSF" id="PIRSF000497">
    <property type="entry name" value="MAT"/>
    <property type="match status" value="1"/>
</dbReference>
<dbReference type="SUPFAM" id="SSF55973">
    <property type="entry name" value="S-adenosylmethionine synthetase"/>
    <property type="match status" value="3"/>
</dbReference>
<dbReference type="PROSITE" id="PS00376">
    <property type="entry name" value="ADOMET_SYNTHASE_1"/>
    <property type="match status" value="1"/>
</dbReference>
<dbReference type="PROSITE" id="PS00377">
    <property type="entry name" value="ADOMET_SYNTHASE_2"/>
    <property type="match status" value="1"/>
</dbReference>
<accession>A9BDW6</accession>
<organism>
    <name type="scientific">Prochlorococcus marinus (strain MIT 9211)</name>
    <dbReference type="NCBI Taxonomy" id="93059"/>
    <lineage>
        <taxon>Bacteria</taxon>
        <taxon>Bacillati</taxon>
        <taxon>Cyanobacteriota</taxon>
        <taxon>Cyanophyceae</taxon>
        <taxon>Synechococcales</taxon>
        <taxon>Prochlorococcaceae</taxon>
        <taxon>Prochlorococcus</taxon>
    </lineage>
</organism>
<name>METK_PROM4</name>
<gene>
    <name evidence="1" type="primary">metK</name>
    <name type="ordered locus">P9211_03451</name>
</gene>
<protein>
    <recommendedName>
        <fullName evidence="1">S-adenosylmethionine synthase</fullName>
        <shortName evidence="1">AdoMet synthase</shortName>
        <ecNumber evidence="1">2.5.1.6</ecNumber>
    </recommendedName>
    <alternativeName>
        <fullName evidence="1">MAT</fullName>
    </alternativeName>
    <alternativeName>
        <fullName evidence="1">Methionine adenosyltransferase</fullName>
    </alternativeName>
</protein>
<comment type="function">
    <text evidence="1">Catalyzes the formation of S-adenosylmethionine (AdoMet) from methionine and ATP. The overall synthetic reaction is composed of two sequential steps, AdoMet formation and the subsequent tripolyphosphate hydrolysis which occurs prior to release of AdoMet from the enzyme.</text>
</comment>
<comment type="catalytic activity">
    <reaction evidence="1">
        <text>L-methionine + ATP + H2O = S-adenosyl-L-methionine + phosphate + diphosphate</text>
        <dbReference type="Rhea" id="RHEA:21080"/>
        <dbReference type="ChEBI" id="CHEBI:15377"/>
        <dbReference type="ChEBI" id="CHEBI:30616"/>
        <dbReference type="ChEBI" id="CHEBI:33019"/>
        <dbReference type="ChEBI" id="CHEBI:43474"/>
        <dbReference type="ChEBI" id="CHEBI:57844"/>
        <dbReference type="ChEBI" id="CHEBI:59789"/>
        <dbReference type="EC" id="2.5.1.6"/>
    </reaction>
</comment>
<comment type="cofactor">
    <cofactor evidence="1">
        <name>Mg(2+)</name>
        <dbReference type="ChEBI" id="CHEBI:18420"/>
    </cofactor>
    <text evidence="1">Binds 2 divalent ions per subunit.</text>
</comment>
<comment type="cofactor">
    <cofactor evidence="1">
        <name>K(+)</name>
        <dbReference type="ChEBI" id="CHEBI:29103"/>
    </cofactor>
    <text evidence="1">Binds 1 potassium ion per subunit.</text>
</comment>
<comment type="pathway">
    <text evidence="1">Amino-acid biosynthesis; S-adenosyl-L-methionine biosynthesis; S-adenosyl-L-methionine from L-methionine: step 1/1.</text>
</comment>
<comment type="subunit">
    <text evidence="1">Homotetramer; dimer of dimers.</text>
</comment>
<comment type="subcellular location">
    <subcellularLocation>
        <location evidence="1">Cytoplasm</location>
    </subcellularLocation>
</comment>
<comment type="similarity">
    <text evidence="1">Belongs to the AdoMet synthase family.</text>
</comment>
<sequence length="410" mass="44642">MSQFVFTSESVTEGHPDKICDQISDAVLDALLTQDPHSRVACEAVVNTGLCLITGEVTSTAEVDFINLVRSVIKEIGYKDAQAGGFDANSCAVLVALDKQSPDIAKGVDTAEDHTDDPFDKIGAGDQGIMFGYACNETPELMPLPISLAHRLARQLAKIRHQGTLKYLLPDGKTQVSVIYENNEPIAIDTIVISTQHTSEIDDLSSEADIRERITKDLWEYVVKPATSDLKLQPNQEKTRFLVNPTGKFVVGGPQGDAGLTGRKIIVDTYGGYARHGGGAFSGKDPTKVDRSAAYAARFVAKSIVAAKLAKRVEVQLSYAIGVANPVSILVEAYGSGKMSNQELTKVVKKHFDLRPGAIIEQFNLKNLPSKRSGRFYRDTAAYGHFGRPDLNLPWEKVDEKAKELIALHN</sequence>
<proteinExistence type="inferred from homology"/>
<keyword id="KW-0067">ATP-binding</keyword>
<keyword id="KW-0963">Cytoplasm</keyword>
<keyword id="KW-0460">Magnesium</keyword>
<keyword id="KW-0479">Metal-binding</keyword>
<keyword id="KW-0547">Nucleotide-binding</keyword>
<keyword id="KW-0554">One-carbon metabolism</keyword>
<keyword id="KW-0630">Potassium</keyword>
<keyword id="KW-1185">Reference proteome</keyword>
<keyword id="KW-0808">Transferase</keyword>